<sequence length="380" mass="42800">MTIIRKKHPLIKIINHSFIDLPAPSNISSWWNFGSLLGLCLAIQILTGLFLAMHYTSDTATAFSSVAHICRDVNYGWLIRYMHANGASMFFICLFLHVGRGIYYGSYNMIETWNMGIILLFAVMATAFMGYVLPWGQMSFWGATVITNLLSAIPYVGTTLVEWIWGGFSVDKATLTRFFAFHFILPFIITALVLVHLLFLHETGSNNPTGLNSDADKIPFHPYYTIKDFLGVLILLMAFMILTLFFPDILGDPDNYTPANPLNTPPHIKPEWYFLFAYAILRSIPNKLGGVLALVLSILVLALMPLLHTSKQRALTFRPITQTMYWILVADLLILTWIGGQPVEYPFIIIGQTASIAYFTIIMILMPIAGMIENNILDLD</sequence>
<feature type="chain" id="PRO_0000255084" description="Cytochrome b">
    <location>
        <begin position="1"/>
        <end position="380"/>
    </location>
</feature>
<feature type="transmembrane region" description="Helical" evidence="2">
    <location>
        <begin position="33"/>
        <end position="53"/>
    </location>
</feature>
<feature type="transmembrane region" description="Helical" evidence="2">
    <location>
        <begin position="77"/>
        <end position="98"/>
    </location>
</feature>
<feature type="transmembrane region" description="Helical" evidence="2">
    <location>
        <begin position="113"/>
        <end position="133"/>
    </location>
</feature>
<feature type="transmembrane region" description="Helical" evidence="2">
    <location>
        <begin position="178"/>
        <end position="198"/>
    </location>
</feature>
<feature type="transmembrane region" description="Helical" evidence="2">
    <location>
        <begin position="226"/>
        <end position="246"/>
    </location>
</feature>
<feature type="transmembrane region" description="Helical" evidence="2">
    <location>
        <begin position="288"/>
        <end position="308"/>
    </location>
</feature>
<feature type="transmembrane region" description="Helical" evidence="2">
    <location>
        <begin position="320"/>
        <end position="340"/>
    </location>
</feature>
<feature type="transmembrane region" description="Helical" evidence="2">
    <location>
        <begin position="347"/>
        <end position="367"/>
    </location>
</feature>
<feature type="binding site" description="axial binding residue" evidence="2">
    <location>
        <position position="83"/>
    </location>
    <ligand>
        <name>heme b</name>
        <dbReference type="ChEBI" id="CHEBI:60344"/>
        <label>b562</label>
    </ligand>
    <ligandPart>
        <name>Fe</name>
        <dbReference type="ChEBI" id="CHEBI:18248"/>
    </ligandPart>
</feature>
<feature type="binding site" description="axial binding residue" evidence="2">
    <location>
        <position position="97"/>
    </location>
    <ligand>
        <name>heme b</name>
        <dbReference type="ChEBI" id="CHEBI:60344"/>
        <label>b566</label>
    </ligand>
    <ligandPart>
        <name>Fe</name>
        <dbReference type="ChEBI" id="CHEBI:18248"/>
    </ligandPart>
</feature>
<feature type="binding site" description="axial binding residue" evidence="2">
    <location>
        <position position="182"/>
    </location>
    <ligand>
        <name>heme b</name>
        <dbReference type="ChEBI" id="CHEBI:60344"/>
        <label>b562</label>
    </ligand>
    <ligandPart>
        <name>Fe</name>
        <dbReference type="ChEBI" id="CHEBI:18248"/>
    </ligandPart>
</feature>
<feature type="binding site" description="axial binding residue" evidence="2">
    <location>
        <position position="196"/>
    </location>
    <ligand>
        <name>heme b</name>
        <dbReference type="ChEBI" id="CHEBI:60344"/>
        <label>b566</label>
    </ligand>
    <ligandPart>
        <name>Fe</name>
        <dbReference type="ChEBI" id="CHEBI:18248"/>
    </ligandPart>
</feature>
<feature type="binding site" evidence="2">
    <location>
        <position position="201"/>
    </location>
    <ligand>
        <name>a ubiquinone</name>
        <dbReference type="ChEBI" id="CHEBI:16389"/>
    </ligand>
</feature>
<name>CYB_MICLI</name>
<evidence type="ECO:0000250" key="1"/>
<evidence type="ECO:0000250" key="2">
    <source>
        <dbReference type="UniProtKB" id="P00157"/>
    </source>
</evidence>
<evidence type="ECO:0000255" key="3">
    <source>
        <dbReference type="PROSITE-ProRule" id="PRU00967"/>
    </source>
</evidence>
<evidence type="ECO:0000255" key="4">
    <source>
        <dbReference type="PROSITE-ProRule" id="PRU00968"/>
    </source>
</evidence>
<proteinExistence type="inferred from homology"/>
<accession>Q6JDS5</accession>
<keyword id="KW-0249">Electron transport</keyword>
<keyword id="KW-0349">Heme</keyword>
<keyword id="KW-0408">Iron</keyword>
<keyword id="KW-0472">Membrane</keyword>
<keyword id="KW-0479">Metal-binding</keyword>
<keyword id="KW-0496">Mitochondrion</keyword>
<keyword id="KW-0999">Mitochondrion inner membrane</keyword>
<keyword id="KW-0679">Respiratory chain</keyword>
<keyword id="KW-0812">Transmembrane</keyword>
<keyword id="KW-1133">Transmembrane helix</keyword>
<keyword id="KW-0813">Transport</keyword>
<keyword id="KW-0830">Ubiquinone</keyword>
<geneLocation type="mitochondrion"/>
<comment type="function">
    <text evidence="2">Component of the ubiquinol-cytochrome c reductase complex (complex III or cytochrome b-c1 complex) that is part of the mitochondrial respiratory chain. The b-c1 complex mediates electron transfer from ubiquinol to cytochrome c. Contributes to the generation of a proton gradient across the mitochondrial membrane that is then used for ATP synthesis.</text>
</comment>
<comment type="cofactor">
    <cofactor evidence="2">
        <name>heme b</name>
        <dbReference type="ChEBI" id="CHEBI:60344"/>
    </cofactor>
    <text evidence="2">Binds 2 heme b groups non-covalently.</text>
</comment>
<comment type="subunit">
    <text evidence="2">The cytochrome bc1 complex contains 11 subunits: 3 respiratory subunits (MT-CYB, CYC1 and UQCRFS1), 2 core proteins (UQCRC1 and UQCRC2) and 6 low-molecular weight proteins (UQCRH/QCR6, UQCRB/QCR7, UQCRQ/QCR8, UQCR10/QCR9, UQCR11/QCR10 and a cleavage product of UQCRFS1). This cytochrome bc1 complex then forms a dimer.</text>
</comment>
<comment type="subcellular location">
    <subcellularLocation>
        <location evidence="2">Mitochondrion inner membrane</location>
        <topology evidence="2">Multi-pass membrane protein</topology>
    </subcellularLocation>
</comment>
<comment type="miscellaneous">
    <text evidence="1">Heme 1 (or BL or b562) is low-potential and absorbs at about 562 nm, and heme 2 (or BH or b566) is high-potential and absorbs at about 566 nm.</text>
</comment>
<comment type="similarity">
    <text evidence="3 4">Belongs to the cytochrome b family.</text>
</comment>
<comment type="caution">
    <text evidence="2">The full-length protein contains only eight transmembrane helices, not nine as predicted by bioinformatics tools.</text>
</comment>
<gene>
    <name type="primary">MT-CYB</name>
    <name type="synonym">COB</name>
    <name type="synonym">CYTB</name>
    <name type="synonym">MTCYB</name>
</gene>
<organism>
    <name type="scientific">Microtus liechtensteini</name>
    <name type="common">Liechtenstein's pine vole</name>
    <dbReference type="NCBI Taxonomy" id="137714"/>
    <lineage>
        <taxon>Eukaryota</taxon>
        <taxon>Metazoa</taxon>
        <taxon>Chordata</taxon>
        <taxon>Craniata</taxon>
        <taxon>Vertebrata</taxon>
        <taxon>Euteleostomi</taxon>
        <taxon>Mammalia</taxon>
        <taxon>Eutheria</taxon>
        <taxon>Euarchontoglires</taxon>
        <taxon>Glires</taxon>
        <taxon>Rodentia</taxon>
        <taxon>Myomorpha</taxon>
        <taxon>Muroidea</taxon>
        <taxon>Cricetidae</taxon>
        <taxon>Arvicolinae</taxon>
        <taxon>Microtus</taxon>
    </lineage>
</organism>
<protein>
    <recommendedName>
        <fullName>Cytochrome b</fullName>
    </recommendedName>
    <alternativeName>
        <fullName>Complex III subunit 3</fullName>
    </alternativeName>
    <alternativeName>
        <fullName>Complex III subunit III</fullName>
    </alternativeName>
    <alternativeName>
        <fullName>Cytochrome b-c1 complex subunit 3</fullName>
    </alternativeName>
    <alternativeName>
        <fullName>Ubiquinol-cytochrome-c reductase complex cytochrome b subunit</fullName>
    </alternativeName>
</protein>
<dbReference type="EMBL" id="AY513811">
    <property type="protein sequence ID" value="AAS82803.1"/>
    <property type="molecule type" value="Genomic_DNA"/>
</dbReference>
<dbReference type="SMR" id="Q6JDS5"/>
<dbReference type="GO" id="GO:0005743">
    <property type="term" value="C:mitochondrial inner membrane"/>
    <property type="evidence" value="ECO:0007669"/>
    <property type="project" value="UniProtKB-SubCell"/>
</dbReference>
<dbReference type="GO" id="GO:0045275">
    <property type="term" value="C:respiratory chain complex III"/>
    <property type="evidence" value="ECO:0007669"/>
    <property type="project" value="InterPro"/>
</dbReference>
<dbReference type="GO" id="GO:0046872">
    <property type="term" value="F:metal ion binding"/>
    <property type="evidence" value="ECO:0007669"/>
    <property type="project" value="UniProtKB-KW"/>
</dbReference>
<dbReference type="GO" id="GO:0008121">
    <property type="term" value="F:ubiquinol-cytochrome-c reductase activity"/>
    <property type="evidence" value="ECO:0007669"/>
    <property type="project" value="InterPro"/>
</dbReference>
<dbReference type="GO" id="GO:0006122">
    <property type="term" value="P:mitochondrial electron transport, ubiquinol to cytochrome c"/>
    <property type="evidence" value="ECO:0007669"/>
    <property type="project" value="TreeGrafter"/>
</dbReference>
<dbReference type="CDD" id="cd00290">
    <property type="entry name" value="cytochrome_b_C"/>
    <property type="match status" value="1"/>
</dbReference>
<dbReference type="CDD" id="cd00284">
    <property type="entry name" value="Cytochrome_b_N"/>
    <property type="match status" value="1"/>
</dbReference>
<dbReference type="FunFam" id="1.20.810.10:FF:000002">
    <property type="entry name" value="Cytochrome b"/>
    <property type="match status" value="1"/>
</dbReference>
<dbReference type="Gene3D" id="1.20.810.10">
    <property type="entry name" value="Cytochrome Bc1 Complex, Chain C"/>
    <property type="match status" value="1"/>
</dbReference>
<dbReference type="InterPro" id="IPR005798">
    <property type="entry name" value="Cyt_b/b6_C"/>
</dbReference>
<dbReference type="InterPro" id="IPR036150">
    <property type="entry name" value="Cyt_b/b6_C_sf"/>
</dbReference>
<dbReference type="InterPro" id="IPR005797">
    <property type="entry name" value="Cyt_b/b6_N"/>
</dbReference>
<dbReference type="InterPro" id="IPR027387">
    <property type="entry name" value="Cytb/b6-like_sf"/>
</dbReference>
<dbReference type="InterPro" id="IPR030689">
    <property type="entry name" value="Cytochrome_b"/>
</dbReference>
<dbReference type="InterPro" id="IPR048260">
    <property type="entry name" value="Cytochrome_b_C_euk/bac"/>
</dbReference>
<dbReference type="InterPro" id="IPR048259">
    <property type="entry name" value="Cytochrome_b_N_euk/bac"/>
</dbReference>
<dbReference type="InterPro" id="IPR016174">
    <property type="entry name" value="Di-haem_cyt_TM"/>
</dbReference>
<dbReference type="PANTHER" id="PTHR19271">
    <property type="entry name" value="CYTOCHROME B"/>
    <property type="match status" value="1"/>
</dbReference>
<dbReference type="PANTHER" id="PTHR19271:SF16">
    <property type="entry name" value="CYTOCHROME B"/>
    <property type="match status" value="1"/>
</dbReference>
<dbReference type="Pfam" id="PF00032">
    <property type="entry name" value="Cytochrom_B_C"/>
    <property type="match status" value="1"/>
</dbReference>
<dbReference type="Pfam" id="PF00033">
    <property type="entry name" value="Cytochrome_B"/>
    <property type="match status" value="1"/>
</dbReference>
<dbReference type="PIRSF" id="PIRSF038885">
    <property type="entry name" value="COB"/>
    <property type="match status" value="1"/>
</dbReference>
<dbReference type="SUPFAM" id="SSF81648">
    <property type="entry name" value="a domain/subunit of cytochrome bc1 complex (Ubiquinol-cytochrome c reductase)"/>
    <property type="match status" value="1"/>
</dbReference>
<dbReference type="SUPFAM" id="SSF81342">
    <property type="entry name" value="Transmembrane di-heme cytochromes"/>
    <property type="match status" value="1"/>
</dbReference>
<dbReference type="PROSITE" id="PS51003">
    <property type="entry name" value="CYTB_CTER"/>
    <property type="match status" value="1"/>
</dbReference>
<dbReference type="PROSITE" id="PS51002">
    <property type="entry name" value="CYTB_NTER"/>
    <property type="match status" value="1"/>
</dbReference>
<reference key="1">
    <citation type="journal article" date="2004" name="Mol. Phylogenet. Evol.">
        <title>Molecular phylogeny of the speciose vole genus Microtus (Arvicolinae, Rodentia) inferred from mitochondrial DNA sequences.</title>
        <authorList>
            <person name="Jaarola M."/>
            <person name="Martinkova N."/>
            <person name="Gunduz I."/>
            <person name="Brunhoff C."/>
            <person name="Zima J."/>
            <person name="Nadachowski A."/>
            <person name="Amori G."/>
            <person name="Bulatova N.S."/>
            <person name="Chondropoulos B."/>
            <person name="Fraguedakis-Tsolis S."/>
            <person name="Gonzalez-Esteban J."/>
            <person name="Lopez-Fuster M.J."/>
            <person name="Kandaurov A.S."/>
            <person name="Kefelioglu H."/>
            <person name="Mathias M.L."/>
            <person name="Villate I."/>
            <person name="Searle J.B."/>
        </authorList>
    </citation>
    <scope>NUCLEOTIDE SEQUENCE [GENOMIC DNA]</scope>
</reference>